<organism>
    <name type="scientific">Francisella tularensis subsp. tularensis (strain SCHU S4 / Schu 4)</name>
    <dbReference type="NCBI Taxonomy" id="177416"/>
    <lineage>
        <taxon>Bacteria</taxon>
        <taxon>Pseudomonadati</taxon>
        <taxon>Pseudomonadota</taxon>
        <taxon>Gammaproteobacteria</taxon>
        <taxon>Thiotrichales</taxon>
        <taxon>Francisellaceae</taxon>
        <taxon>Francisella</taxon>
    </lineage>
</organism>
<comment type="function">
    <text evidence="1">Catalyzes the conversion of dethiobiotin (DTB) to biotin by the insertion of a sulfur atom into dethiobiotin via a radical-based mechanism.</text>
</comment>
<comment type="catalytic activity">
    <reaction evidence="1">
        <text>(4R,5S)-dethiobiotin + (sulfur carrier)-SH + 2 reduced [2Fe-2S]-[ferredoxin] + 2 S-adenosyl-L-methionine = (sulfur carrier)-H + biotin + 2 5'-deoxyadenosine + 2 L-methionine + 2 oxidized [2Fe-2S]-[ferredoxin]</text>
        <dbReference type="Rhea" id="RHEA:22060"/>
        <dbReference type="Rhea" id="RHEA-COMP:10000"/>
        <dbReference type="Rhea" id="RHEA-COMP:10001"/>
        <dbReference type="Rhea" id="RHEA-COMP:14737"/>
        <dbReference type="Rhea" id="RHEA-COMP:14739"/>
        <dbReference type="ChEBI" id="CHEBI:17319"/>
        <dbReference type="ChEBI" id="CHEBI:29917"/>
        <dbReference type="ChEBI" id="CHEBI:33737"/>
        <dbReference type="ChEBI" id="CHEBI:33738"/>
        <dbReference type="ChEBI" id="CHEBI:57586"/>
        <dbReference type="ChEBI" id="CHEBI:57844"/>
        <dbReference type="ChEBI" id="CHEBI:59789"/>
        <dbReference type="ChEBI" id="CHEBI:64428"/>
        <dbReference type="ChEBI" id="CHEBI:149473"/>
        <dbReference type="EC" id="2.8.1.6"/>
    </reaction>
</comment>
<comment type="cofactor">
    <cofactor evidence="1">
        <name>[4Fe-4S] cluster</name>
        <dbReference type="ChEBI" id="CHEBI:49883"/>
    </cofactor>
    <text evidence="1">Binds 1 [4Fe-4S] cluster. The cluster is coordinated with 3 cysteines and an exchangeable S-adenosyl-L-methionine.</text>
</comment>
<comment type="cofactor">
    <cofactor evidence="1">
        <name>[2Fe-2S] cluster</name>
        <dbReference type="ChEBI" id="CHEBI:190135"/>
    </cofactor>
    <text evidence="1">Binds 1 [2Fe-2S] cluster. The cluster is coordinated with 3 cysteines and 1 arginine.</text>
</comment>
<comment type="pathway">
    <text evidence="1">Cofactor biosynthesis; biotin biosynthesis; biotin from 7,8-diaminononanoate: step 2/2.</text>
</comment>
<comment type="subunit">
    <text evidence="1">Homodimer.</text>
</comment>
<comment type="similarity">
    <text evidence="1">Belongs to the radical SAM superfamily. Biotin synthase family.</text>
</comment>
<sequence length="313" mass="34895">MTLQQIKEIYSRPLTELILQALEIHNKNFGNDIELCSLKSIKTGTCPEDCKYCPQSGHYNTSIEKHKLLDKDSILAEAKNAKDAGSKRFCMGAAWKHIPKKDFDQVAEIITEVKNLGLETCVTLGSINADEATKLKQAGLDYYNHNLDTSREFYPEIITTRKFEERIETIRNVANADINVCCGGILGMGESLDDRFNLLLELLQLPAAPKSIPINTLIPIKGTPLGDKYTNAQIDSFELVRFIATTRILFPQARLRLSAGRENMSLETQTLCFLAGINSIFYGNKLLTENNATVNSDNFLLAKLGLKSNAELC</sequence>
<accession>Q5NGB2</accession>
<protein>
    <recommendedName>
        <fullName evidence="1">Biotin synthase</fullName>
        <ecNumber evidence="1">2.8.1.6</ecNumber>
    </recommendedName>
</protein>
<gene>
    <name evidence="1" type="primary">bioB</name>
    <name type="ordered locus">FTT_0937c</name>
</gene>
<feature type="chain" id="PRO_0000381397" description="Biotin synthase">
    <location>
        <begin position="1"/>
        <end position="313"/>
    </location>
</feature>
<feature type="domain" description="Radical SAM core" evidence="2">
    <location>
        <begin position="28"/>
        <end position="258"/>
    </location>
</feature>
<feature type="binding site" evidence="1">
    <location>
        <position position="46"/>
    </location>
    <ligand>
        <name>[4Fe-4S] cluster</name>
        <dbReference type="ChEBI" id="CHEBI:49883"/>
        <note>4Fe-4S-S-AdoMet</note>
    </ligand>
</feature>
<feature type="binding site" evidence="1">
    <location>
        <position position="50"/>
    </location>
    <ligand>
        <name>[4Fe-4S] cluster</name>
        <dbReference type="ChEBI" id="CHEBI:49883"/>
        <note>4Fe-4S-S-AdoMet</note>
    </ligand>
</feature>
<feature type="binding site" evidence="1">
    <location>
        <position position="53"/>
    </location>
    <ligand>
        <name>[4Fe-4S] cluster</name>
        <dbReference type="ChEBI" id="CHEBI:49883"/>
        <note>4Fe-4S-S-AdoMet</note>
    </ligand>
</feature>
<feature type="binding site" evidence="1">
    <location>
        <position position="90"/>
    </location>
    <ligand>
        <name>[2Fe-2S] cluster</name>
        <dbReference type="ChEBI" id="CHEBI:190135"/>
    </ligand>
</feature>
<feature type="binding site" evidence="1">
    <location>
        <position position="121"/>
    </location>
    <ligand>
        <name>[2Fe-2S] cluster</name>
        <dbReference type="ChEBI" id="CHEBI:190135"/>
    </ligand>
</feature>
<feature type="binding site" evidence="1">
    <location>
        <position position="181"/>
    </location>
    <ligand>
        <name>[2Fe-2S] cluster</name>
        <dbReference type="ChEBI" id="CHEBI:190135"/>
    </ligand>
</feature>
<feature type="binding site" evidence="1">
    <location>
        <position position="256"/>
    </location>
    <ligand>
        <name>[2Fe-2S] cluster</name>
        <dbReference type="ChEBI" id="CHEBI:190135"/>
    </ligand>
</feature>
<name>BIOB_FRATT</name>
<reference key="1">
    <citation type="journal article" date="2005" name="Nat. Genet.">
        <title>The complete genome sequence of Francisella tularensis, the causative agent of tularemia.</title>
        <authorList>
            <person name="Larsson P."/>
            <person name="Oyston P.C.F."/>
            <person name="Chain P."/>
            <person name="Chu M.C."/>
            <person name="Duffield M."/>
            <person name="Fuxelius H.-H."/>
            <person name="Garcia E."/>
            <person name="Haelltorp G."/>
            <person name="Johansson D."/>
            <person name="Isherwood K.E."/>
            <person name="Karp P.D."/>
            <person name="Larsson E."/>
            <person name="Liu Y."/>
            <person name="Michell S."/>
            <person name="Prior J."/>
            <person name="Prior R."/>
            <person name="Malfatti S."/>
            <person name="Sjoestedt A."/>
            <person name="Svensson K."/>
            <person name="Thompson N."/>
            <person name="Vergez L."/>
            <person name="Wagg J.K."/>
            <person name="Wren B.W."/>
            <person name="Lindler L.E."/>
            <person name="Andersson S.G.E."/>
            <person name="Forsman M."/>
            <person name="Titball R.W."/>
        </authorList>
    </citation>
    <scope>NUCLEOTIDE SEQUENCE [LARGE SCALE GENOMIC DNA]</scope>
    <source>
        <strain>SCHU S4 / Schu 4</strain>
    </source>
</reference>
<proteinExistence type="inferred from homology"/>
<evidence type="ECO:0000255" key="1">
    <source>
        <dbReference type="HAMAP-Rule" id="MF_01694"/>
    </source>
</evidence>
<evidence type="ECO:0000255" key="2">
    <source>
        <dbReference type="PROSITE-ProRule" id="PRU01266"/>
    </source>
</evidence>
<dbReference type="EC" id="2.8.1.6" evidence="1"/>
<dbReference type="EMBL" id="AJ749949">
    <property type="protein sequence ID" value="CAG45570.1"/>
    <property type="molecule type" value="Genomic_DNA"/>
</dbReference>
<dbReference type="RefSeq" id="WP_003020978.1">
    <property type="nucleotide sequence ID" value="NC_006570.2"/>
</dbReference>
<dbReference type="RefSeq" id="YP_169930.1">
    <property type="nucleotide sequence ID" value="NC_006570.2"/>
</dbReference>
<dbReference type="SMR" id="Q5NGB2"/>
<dbReference type="IntAct" id="Q5NGB2">
    <property type="interactions" value="1"/>
</dbReference>
<dbReference type="STRING" id="177416.FTT_0937c"/>
<dbReference type="DNASU" id="3190968"/>
<dbReference type="EnsemblBacteria" id="CAG45570">
    <property type="protein sequence ID" value="CAG45570"/>
    <property type="gene ID" value="FTT_0937c"/>
</dbReference>
<dbReference type="KEGG" id="ftu:FTT_0937c"/>
<dbReference type="eggNOG" id="COG0502">
    <property type="taxonomic scope" value="Bacteria"/>
</dbReference>
<dbReference type="OrthoDB" id="9786826at2"/>
<dbReference type="UniPathway" id="UPA00078">
    <property type="reaction ID" value="UER00162"/>
</dbReference>
<dbReference type="Proteomes" id="UP000001174">
    <property type="component" value="Chromosome"/>
</dbReference>
<dbReference type="GO" id="GO:0051537">
    <property type="term" value="F:2 iron, 2 sulfur cluster binding"/>
    <property type="evidence" value="ECO:0007669"/>
    <property type="project" value="UniProtKB-KW"/>
</dbReference>
<dbReference type="GO" id="GO:0051539">
    <property type="term" value="F:4 iron, 4 sulfur cluster binding"/>
    <property type="evidence" value="ECO:0007669"/>
    <property type="project" value="UniProtKB-KW"/>
</dbReference>
<dbReference type="GO" id="GO:0004076">
    <property type="term" value="F:biotin synthase activity"/>
    <property type="evidence" value="ECO:0007669"/>
    <property type="project" value="UniProtKB-UniRule"/>
</dbReference>
<dbReference type="GO" id="GO:0005506">
    <property type="term" value="F:iron ion binding"/>
    <property type="evidence" value="ECO:0007669"/>
    <property type="project" value="UniProtKB-UniRule"/>
</dbReference>
<dbReference type="GO" id="GO:0009102">
    <property type="term" value="P:biotin biosynthetic process"/>
    <property type="evidence" value="ECO:0007669"/>
    <property type="project" value="UniProtKB-UniRule"/>
</dbReference>
<dbReference type="CDD" id="cd01335">
    <property type="entry name" value="Radical_SAM"/>
    <property type="match status" value="1"/>
</dbReference>
<dbReference type="Gene3D" id="3.20.20.70">
    <property type="entry name" value="Aldolase class I"/>
    <property type="match status" value="1"/>
</dbReference>
<dbReference type="HAMAP" id="MF_01694">
    <property type="entry name" value="BioB"/>
    <property type="match status" value="1"/>
</dbReference>
<dbReference type="InterPro" id="IPR013785">
    <property type="entry name" value="Aldolase_TIM"/>
</dbReference>
<dbReference type="InterPro" id="IPR010722">
    <property type="entry name" value="BATS_dom"/>
</dbReference>
<dbReference type="InterPro" id="IPR002684">
    <property type="entry name" value="Biotin_synth/BioAB"/>
</dbReference>
<dbReference type="InterPro" id="IPR024177">
    <property type="entry name" value="Biotin_synthase"/>
</dbReference>
<dbReference type="InterPro" id="IPR006638">
    <property type="entry name" value="Elp3/MiaA/NifB-like_rSAM"/>
</dbReference>
<dbReference type="InterPro" id="IPR007197">
    <property type="entry name" value="rSAM"/>
</dbReference>
<dbReference type="NCBIfam" id="TIGR00433">
    <property type="entry name" value="bioB"/>
    <property type="match status" value="1"/>
</dbReference>
<dbReference type="PANTHER" id="PTHR22976">
    <property type="entry name" value="BIOTIN SYNTHASE"/>
    <property type="match status" value="1"/>
</dbReference>
<dbReference type="PANTHER" id="PTHR22976:SF2">
    <property type="entry name" value="BIOTIN SYNTHASE, MITOCHONDRIAL"/>
    <property type="match status" value="1"/>
</dbReference>
<dbReference type="Pfam" id="PF06968">
    <property type="entry name" value="BATS"/>
    <property type="match status" value="1"/>
</dbReference>
<dbReference type="Pfam" id="PF04055">
    <property type="entry name" value="Radical_SAM"/>
    <property type="match status" value="1"/>
</dbReference>
<dbReference type="PIRSF" id="PIRSF001619">
    <property type="entry name" value="Biotin_synth"/>
    <property type="match status" value="1"/>
</dbReference>
<dbReference type="SFLD" id="SFLDG01060">
    <property type="entry name" value="BATS_domain_containing"/>
    <property type="match status" value="1"/>
</dbReference>
<dbReference type="SFLD" id="SFLDF00272">
    <property type="entry name" value="biotin_synthase"/>
    <property type="match status" value="1"/>
</dbReference>
<dbReference type="SMART" id="SM00876">
    <property type="entry name" value="BATS"/>
    <property type="match status" value="1"/>
</dbReference>
<dbReference type="SMART" id="SM00729">
    <property type="entry name" value="Elp3"/>
    <property type="match status" value="1"/>
</dbReference>
<dbReference type="SUPFAM" id="SSF102114">
    <property type="entry name" value="Radical SAM enzymes"/>
    <property type="match status" value="1"/>
</dbReference>
<dbReference type="PROSITE" id="PS51918">
    <property type="entry name" value="RADICAL_SAM"/>
    <property type="match status" value="1"/>
</dbReference>
<keyword id="KW-0001">2Fe-2S</keyword>
<keyword id="KW-0004">4Fe-4S</keyword>
<keyword id="KW-0093">Biotin biosynthesis</keyword>
<keyword id="KW-0408">Iron</keyword>
<keyword id="KW-0411">Iron-sulfur</keyword>
<keyword id="KW-0479">Metal-binding</keyword>
<keyword id="KW-1185">Reference proteome</keyword>
<keyword id="KW-0949">S-adenosyl-L-methionine</keyword>
<keyword id="KW-0808">Transferase</keyword>